<keyword id="KW-0002">3D-structure</keyword>
<keyword id="KW-0007">Acetylation</keyword>
<keyword id="KW-0025">Alternative splicing</keyword>
<keyword id="KW-0966">Cell projection</keyword>
<keyword id="KW-0963">Cytoplasm</keyword>
<keyword id="KW-0217">Developmental protein</keyword>
<keyword id="KW-0221">Differentiation</keyword>
<keyword id="KW-0524">Neurogenesis</keyword>
<keyword id="KW-0597">Phosphoprotein</keyword>
<keyword id="KW-1267">Proteomics identification</keyword>
<keyword id="KW-1185">Reference proteome</keyword>
<keyword id="KW-0043">Tumor suppressor</keyword>
<keyword id="KW-0879">Wnt signaling pathway</keyword>
<name>NDRG2_HUMAN</name>
<feature type="initiator methionine" description="Removed" evidence="21 23">
    <location>
        <position position="1"/>
    </location>
</feature>
<feature type="chain" id="PRO_0000441166" description="Protein NDRG2">
    <location>
        <begin position="2"/>
        <end position="371"/>
    </location>
</feature>
<feature type="region of interest" description="Disordered" evidence="3">
    <location>
        <begin position="1"/>
        <end position="21"/>
    </location>
</feature>
<feature type="region of interest" description="Disordered" evidence="3">
    <location>
        <begin position="334"/>
        <end position="371"/>
    </location>
</feature>
<feature type="compositionally biased region" description="Low complexity" evidence="3">
    <location>
        <begin position="347"/>
        <end position="361"/>
    </location>
</feature>
<feature type="modified residue" description="N-acetylalanine" evidence="21 23">
    <location>
        <position position="2"/>
    </location>
</feature>
<feature type="modified residue" description="Phosphothreonine" evidence="25">
    <location>
        <position position="20"/>
    </location>
</feature>
<feature type="modified residue" description="Phosphoserine" evidence="25">
    <location>
        <position position="326"/>
    </location>
</feature>
<feature type="modified residue" description="Phosphoserine" evidence="22 25">
    <location>
        <position position="328"/>
    </location>
</feature>
<feature type="modified residue" description="Phosphothreonine" evidence="24 25">
    <location>
        <position position="330"/>
    </location>
</feature>
<feature type="modified residue" description="Phosphoserine" evidence="22 24 25">
    <location>
        <position position="332"/>
    </location>
</feature>
<feature type="modified residue" description="Phosphothreonine" evidence="25">
    <location>
        <position position="334"/>
    </location>
</feature>
<feature type="modified residue" description="Phosphoserine" evidence="2">
    <location>
        <position position="335"/>
    </location>
</feature>
<feature type="modified residue" description="Phosphoserine" evidence="20 22 24 25">
    <location>
        <position position="338"/>
    </location>
</feature>
<feature type="modified residue" description="Phosphoserine" evidence="25">
    <location>
        <position position="344"/>
    </location>
</feature>
<feature type="modified residue" description="Phosphothreonine" evidence="22">
    <location>
        <position position="348"/>
    </location>
</feature>
<feature type="modified residue" description="Phosphoserine" evidence="2">
    <location>
        <position position="350"/>
    </location>
</feature>
<feature type="modified residue" description="Phosphoserine" evidence="2">
    <location>
        <position position="352"/>
    </location>
</feature>
<feature type="modified residue" description="Phosphoserine" evidence="2">
    <location>
        <position position="353"/>
    </location>
</feature>
<feature type="modified residue" description="Phosphoserine" evidence="2">
    <location>
        <position position="355"/>
    </location>
</feature>
<feature type="modified residue" description="Phosphothreonine" evidence="2">
    <location>
        <position position="357"/>
    </location>
</feature>
<feature type="modified residue" description="Phosphoserine" evidence="2">
    <location>
        <position position="370"/>
    </location>
</feature>
<feature type="splice variant" id="VSP_054583" description="In isoform 6." evidence="15">
    <original>M</original>
    <variation>MENGGSMQATM</variation>
    <location>
        <position position="1"/>
    </location>
</feature>
<feature type="splice variant" id="VSP_003417" description="In isoform 2, isoform 4, isoform 5 and isoform 6." evidence="13 14 15 16 17 18">
    <location>
        <begin position="26"/>
        <end position="39"/>
    </location>
</feature>
<feature type="splice variant" id="VSP_019007" description="In isoform 4." evidence="18">
    <location>
        <begin position="157"/>
        <end position="185"/>
    </location>
</feature>
<feature type="splice variant" id="VSP_003418" description="In isoform 3." evidence="16">
    <location>
        <begin position="262"/>
        <end position="272"/>
    </location>
</feature>
<feature type="splice variant" id="VSP_019008" description="In isoform 5." evidence="18">
    <location>
        <begin position="272"/>
        <end position="287"/>
    </location>
</feature>
<feature type="sequence variant" id="VAR_050236" description="In dbSNP:rs36007455.">
    <original>T</original>
    <variation>S</variation>
    <location>
        <position position="45"/>
    </location>
</feature>
<feature type="sequence variant" id="VAR_026572" description="In dbSNP:rs11552412." evidence="9">
    <original>G</original>
    <variation>V</variation>
    <location>
        <position position="48"/>
    </location>
</feature>
<feature type="mutagenesis site" description="Decreased interaction with CTNNB1. Abolishes down-regulation of Wnt signaling." evidence="12">
    <original>L</original>
    <variation>D</variation>
    <location>
        <position position="186"/>
    </location>
</feature>
<feature type="sequence conflict" description="In Ref. 2; AAL08624." evidence="19" ref="2">
    <original>V</original>
    <variation>A</variation>
    <location>
        <position position="54"/>
    </location>
</feature>
<feature type="sequence conflict" description="In Ref. 11; AAH93038." evidence="19" ref="11">
    <original>Q</original>
    <variation>E</variation>
    <location>
        <position position="123"/>
    </location>
</feature>
<feature type="sequence conflict" description="In Ref. 3; AAK50340." evidence="19" ref="3">
    <original>D</original>
    <variation>G</variation>
    <location>
        <position position="172"/>
    </location>
</feature>
<feature type="sequence conflict" description="In Ref. 2; AAL08624." evidence="19" ref="2">
    <original>D</original>
    <variation>N</variation>
    <location>
        <position position="250"/>
    </location>
</feature>
<feature type="sequence conflict" description="In Ref. 11; AAH93038." evidence="19" ref="11">
    <original>Q</original>
    <variation>R</variation>
    <location>
        <position position="282"/>
    </location>
</feature>
<feature type="sequence conflict" description="In Ref. 3; AAK50340." evidence="19" ref="3">
    <original>Q</original>
    <variation>R</variation>
    <location>
        <position position="296"/>
    </location>
</feature>
<feature type="sequence conflict" description="In Ref. 2; AAL08624." evidence="19" ref="2">
    <original>A</original>
    <variation>V</variation>
    <location>
        <position position="306"/>
    </location>
</feature>
<feature type="strand" evidence="26">
    <location>
        <begin position="39"/>
        <end position="45"/>
    </location>
</feature>
<feature type="strand" evidence="26">
    <location>
        <begin position="48"/>
        <end position="57"/>
    </location>
</feature>
<feature type="strand" evidence="26">
    <location>
        <begin position="64"/>
        <end position="68"/>
    </location>
</feature>
<feature type="helix" evidence="26">
    <location>
        <begin position="75"/>
        <end position="78"/>
    </location>
</feature>
<feature type="helix" evidence="26">
    <location>
        <begin position="80"/>
        <end position="84"/>
    </location>
</feature>
<feature type="helix" evidence="26">
    <location>
        <begin position="86"/>
        <end position="92"/>
    </location>
</feature>
<feature type="strand" evidence="26">
    <location>
        <begin position="97"/>
        <end position="101"/>
    </location>
</feature>
<feature type="helix" evidence="26">
    <location>
        <begin position="121"/>
        <end position="125"/>
    </location>
</feature>
<feature type="helix" evidence="26">
    <location>
        <begin position="128"/>
        <end position="135"/>
    </location>
</feature>
<feature type="strand" evidence="26">
    <location>
        <begin position="140"/>
        <end position="145"/>
    </location>
</feature>
<feature type="helix" evidence="26">
    <location>
        <begin position="147"/>
        <end position="158"/>
    </location>
</feature>
<feature type="helix" evidence="26">
    <location>
        <begin position="160"/>
        <end position="162"/>
    </location>
</feature>
<feature type="strand" evidence="26">
    <location>
        <begin position="163"/>
        <end position="170"/>
    </location>
</feature>
<feature type="helix" evidence="26">
    <location>
        <begin position="178"/>
        <end position="187"/>
    </location>
</feature>
<feature type="turn" evidence="26">
    <location>
        <begin position="188"/>
        <end position="190"/>
    </location>
</feature>
<feature type="helix" evidence="26">
    <location>
        <begin position="193"/>
        <end position="201"/>
    </location>
</feature>
<feature type="helix" evidence="26">
    <location>
        <begin position="204"/>
        <end position="209"/>
    </location>
</feature>
<feature type="helix" evidence="26">
    <location>
        <begin position="212"/>
        <end position="222"/>
    </location>
</feature>
<feature type="helix" evidence="26">
    <location>
        <begin position="227"/>
        <end position="238"/>
    </location>
</feature>
<feature type="strand" evidence="26">
    <location>
        <begin position="249"/>
        <end position="251"/>
    </location>
</feature>
<feature type="strand" evidence="26">
    <location>
        <begin position="257"/>
        <end position="262"/>
    </location>
</feature>
<feature type="helix" evidence="26">
    <location>
        <begin position="268"/>
        <end position="275"/>
    </location>
</feature>
<feature type="turn" evidence="26">
    <location>
        <begin position="280"/>
        <end position="282"/>
    </location>
</feature>
<feature type="strand" evidence="26">
    <location>
        <begin position="283"/>
        <end position="288"/>
    </location>
</feature>
<feature type="helix" evidence="26">
    <location>
        <begin position="295"/>
        <end position="298"/>
    </location>
</feature>
<feature type="helix" evidence="26">
    <location>
        <begin position="300"/>
        <end position="314"/>
    </location>
</feature>
<comment type="function">
    <text evidence="6 11 12">Contributes to the regulation of the Wnt signaling pathway. Down-regulates CTNNB1-mediated transcriptional activation of target genes, such as CCND1, and may thereby act as tumor suppressor. May be involved in dendritic cell and neuron differentiation.</text>
</comment>
<comment type="subunit">
    <text evidence="12">Interacts with CTNNB1.</text>
</comment>
<comment type="interaction">
    <interactant intactId="EBI-3895741">
        <id>Q9UN36</id>
    </interactant>
    <interactant intactId="EBI-78473">
        <id>P03372</id>
        <label>ESR1</label>
    </interactant>
    <organismsDiffer>false</organismsDiffer>
    <experiments>2</experiments>
</comment>
<comment type="interaction">
    <interactant intactId="EBI-8084503">
        <id>Q9UN36-1</id>
    </interactant>
    <interactant intactId="EBI-712367">
        <id>Q9UI14</id>
        <label>RABAC1</label>
    </interactant>
    <organismsDiffer>false</organismsDiffer>
    <experiments>7</experiments>
</comment>
<comment type="subcellular location">
    <subcellularLocation>
        <location>Cytoplasm</location>
    </subcellularLocation>
    <subcellularLocation>
        <location>Cytoplasm</location>
        <location>Perinuclear region</location>
    </subcellularLocation>
    <subcellularLocation>
        <location evidence="1">Cell projection</location>
        <location evidence="1">Growth cone</location>
    </subcellularLocation>
    <text evidence="1">In neurons, seems to concentrate at axonal growth cone. Perinuclear in neurons (By similarity).</text>
</comment>
<comment type="alternative products">
    <event type="alternative splicing"/>
    <isoform>
        <id>Q9UN36-1</id>
        <name>1</name>
        <name>NDRG2ins</name>
        <sequence type="displayed"/>
    </isoform>
    <isoform>
        <id>Q9UN36-2</id>
        <name>2</name>
        <name>NDRG2var</name>
        <sequence type="described" ref="VSP_003417"/>
    </isoform>
    <isoform>
        <id>Q9UN36-3</id>
        <name>3</name>
        <sequence type="described" ref="VSP_003418"/>
    </isoform>
    <isoform>
        <id>Q9UN36-4</id>
        <name>4</name>
        <sequence type="described" ref="VSP_003417 VSP_019007"/>
    </isoform>
    <isoform>
        <id>Q9UN36-5</id>
        <name>5</name>
        <sequence type="described" ref="VSP_003417 VSP_019008"/>
    </isoform>
    <isoform>
        <id>Q9UN36-6</id>
        <name>6</name>
        <sequence type="described" ref="VSP_054583 VSP_003417"/>
    </isoform>
</comment>
<comment type="tissue specificity">
    <text evidence="4 5 6 7 8 10 11">Highly expressed in brain, heart, skeletal muscle and salivary gland, and moderately in kidney and liver. Expressed in dendritic cells, but not in other blood cells. Expression levels are low in pancreatic and liver cancer tissues; absent in meningioma. Expressed in low-grade gliomas but present at low levels in glioblastoma. Isoform 1 and isoform 2 are present in brain neurons and up-regulated in Alzheimer disease (at protein level).</text>
</comment>
<comment type="developmental stage">
    <text evidence="7 8">Specifically expressed during dendritic cell differentiation (in vitro). Expression is low in fetal brain and increases during brain postnatal development.</text>
</comment>
<comment type="similarity">
    <text evidence="19">Belongs to the NDRG family.</text>
</comment>
<comment type="caution">
    <text evidence="19">Has some similarity to hydrolases, but lacks the conserved Ser-His-Asp catalytic triad. Has no hydrolase activity towards p-nitrophenylbutyrate (in vitro).</text>
</comment>
<comment type="sequence caution" evidence="19">
    <conflict type="erroneous initiation">
        <sequence resource="EMBL-CDS" id="BAA86562"/>
    </conflict>
    <text>Extended N-terminus.</text>
</comment>
<comment type="sequence caution" evidence="19">
    <conflict type="erroneous initiation">
        <sequence resource="EMBL-CDS" id="CAD62350"/>
    </conflict>
    <text>Extended N-terminus.</text>
</comment>
<comment type="online information" name="Atlas of Genetics and Cytogenetics in Oncology and Haematology">
    <link uri="https://atlasgeneticsoncology.org/gene/41513/NDRG2"/>
</comment>
<gene>
    <name type="primary">NDRG2</name>
    <name type="synonym">KIAA1248</name>
    <name type="synonym">SYLD</name>
</gene>
<sequence>MAELQEVQITEEKPLLPGQTPEAAKEAELAARILLDQGQTHSVETPYGSVTFTVYGTPKPKRPAILTYHDVGLNYKSCFQPLFQFEDMQEIIQNFVRVHVDAPGMEEGAPVFPLGYQYPSLDQLADMIPCVLQYLNFSTIIGVGVGAGAYILARYALNHPDTVEGLVLINIDPNAKGWMDWAAHKLTGLTSSIPEMILGHLFSQEELSGNSELIQKYRNIITHAPNLDNIELYWNSYNNRRDLNFERGGDITLRCPVMLVVGDQAPHEDAVVECNSKLDPTQTSFLKMADSGGQPQLTQPGKLTEAFKYFLQGMGYMASSCMTRLSRSRTASLTSAASVDGNRSRSRTLSQSSESGTLSSGPPGHTMEVSC</sequence>
<evidence type="ECO:0000250" key="1"/>
<evidence type="ECO:0000250" key="2">
    <source>
        <dbReference type="UniProtKB" id="Q9QYG0"/>
    </source>
</evidence>
<evidence type="ECO:0000256" key="3">
    <source>
        <dbReference type="SAM" id="MobiDB-lite"/>
    </source>
</evidence>
<evidence type="ECO:0000269" key="4">
    <source>
    </source>
</evidence>
<evidence type="ECO:0000269" key="5">
    <source>
    </source>
</evidence>
<evidence type="ECO:0000269" key="6">
    <source>
    </source>
</evidence>
<evidence type="ECO:0000269" key="7">
    <source>
    </source>
</evidence>
<evidence type="ECO:0000269" key="8">
    <source>
    </source>
</evidence>
<evidence type="ECO:0000269" key="9">
    <source>
    </source>
</evidence>
<evidence type="ECO:0000269" key="10">
    <source>
    </source>
</evidence>
<evidence type="ECO:0000269" key="11">
    <source>
    </source>
</evidence>
<evidence type="ECO:0000269" key="12">
    <source>
    </source>
</evidence>
<evidence type="ECO:0000303" key="13">
    <source>
    </source>
</evidence>
<evidence type="ECO:0000303" key="14">
    <source>
    </source>
</evidence>
<evidence type="ECO:0000303" key="15">
    <source>
    </source>
</evidence>
<evidence type="ECO:0000303" key="16">
    <source>
    </source>
</evidence>
<evidence type="ECO:0000303" key="17">
    <source>
    </source>
</evidence>
<evidence type="ECO:0000303" key="18">
    <source ref="6"/>
</evidence>
<evidence type="ECO:0000305" key="19"/>
<evidence type="ECO:0007744" key="20">
    <source>
    </source>
</evidence>
<evidence type="ECO:0007744" key="21">
    <source>
    </source>
</evidence>
<evidence type="ECO:0007744" key="22">
    <source>
    </source>
</evidence>
<evidence type="ECO:0007744" key="23">
    <source>
    </source>
</evidence>
<evidence type="ECO:0007744" key="24">
    <source>
    </source>
</evidence>
<evidence type="ECO:0007744" key="25">
    <source>
    </source>
</evidence>
<evidence type="ECO:0007829" key="26">
    <source>
        <dbReference type="PDB" id="2XMR"/>
    </source>
</evidence>
<protein>
    <recommendedName>
        <fullName>Protein NDRG2</fullName>
    </recommendedName>
    <alternativeName>
        <fullName>N-myc downstream-regulated gene 2 protein</fullName>
    </alternativeName>
    <alternativeName>
        <fullName>Protein Syld709613</fullName>
    </alternativeName>
</protein>
<dbReference type="EMBL" id="AF304051">
    <property type="protein sequence ID" value="AAL08624.1"/>
    <property type="molecule type" value="mRNA"/>
</dbReference>
<dbReference type="EMBL" id="AF159092">
    <property type="protein sequence ID" value="AAD43131.2"/>
    <property type="molecule type" value="mRNA"/>
</dbReference>
<dbReference type="EMBL" id="AY028430">
    <property type="protein sequence ID" value="AAK50340.1"/>
    <property type="molecule type" value="Genomic_DNA"/>
</dbReference>
<dbReference type="EMBL" id="AB033074">
    <property type="protein sequence ID" value="BAA86562.1"/>
    <property type="status" value="ALT_INIT"/>
    <property type="molecule type" value="mRNA"/>
</dbReference>
<dbReference type="EMBL" id="AL136574">
    <property type="protein sequence ID" value="CAB66509.1"/>
    <property type="molecule type" value="mRNA"/>
</dbReference>
<dbReference type="EMBL" id="BX247987">
    <property type="protein sequence ID" value="CAD62321.1"/>
    <property type="molecule type" value="mRNA"/>
</dbReference>
<dbReference type="EMBL" id="BX248031">
    <property type="protein sequence ID" value="CAD62350.1"/>
    <property type="status" value="ALT_INIT"/>
    <property type="molecule type" value="mRNA"/>
</dbReference>
<dbReference type="EMBL" id="AK096999">
    <property type="protein sequence ID" value="BAG53405.1"/>
    <property type="molecule type" value="mRNA"/>
</dbReference>
<dbReference type="EMBL" id="AK293514">
    <property type="protein sequence ID" value="BAG56997.1"/>
    <property type="molecule type" value="mRNA"/>
</dbReference>
<dbReference type="EMBL" id="CR749252">
    <property type="protein sequence ID" value="CAH18108.1"/>
    <property type="molecule type" value="mRNA"/>
</dbReference>
<dbReference type="EMBL" id="AL161668">
    <property type="status" value="NOT_ANNOTATED_CDS"/>
    <property type="molecule type" value="Genomic_DNA"/>
</dbReference>
<dbReference type="EMBL" id="CH471078">
    <property type="protein sequence ID" value="EAW66423.1"/>
    <property type="molecule type" value="Genomic_DNA"/>
</dbReference>
<dbReference type="EMBL" id="CH471078">
    <property type="protein sequence ID" value="EAW66422.1"/>
    <property type="molecule type" value="Genomic_DNA"/>
</dbReference>
<dbReference type="EMBL" id="CH471078">
    <property type="protein sequence ID" value="EAW66424.1"/>
    <property type="molecule type" value="Genomic_DNA"/>
</dbReference>
<dbReference type="EMBL" id="CH471078">
    <property type="protein sequence ID" value="EAW66425.1"/>
    <property type="molecule type" value="Genomic_DNA"/>
</dbReference>
<dbReference type="EMBL" id="CH471078">
    <property type="protein sequence ID" value="EAW66426.1"/>
    <property type="molecule type" value="Genomic_DNA"/>
</dbReference>
<dbReference type="EMBL" id="CH471078">
    <property type="protein sequence ID" value="EAW66427.1"/>
    <property type="molecule type" value="Genomic_DNA"/>
</dbReference>
<dbReference type="EMBL" id="CH471078">
    <property type="protein sequence ID" value="EAW66428.1"/>
    <property type="molecule type" value="Genomic_DNA"/>
</dbReference>
<dbReference type="EMBL" id="CH471078">
    <property type="protein sequence ID" value="EAW66429.1"/>
    <property type="molecule type" value="Genomic_DNA"/>
</dbReference>
<dbReference type="EMBL" id="CH471078">
    <property type="protein sequence ID" value="EAW66430.1"/>
    <property type="molecule type" value="Genomic_DNA"/>
</dbReference>
<dbReference type="EMBL" id="BC010458">
    <property type="protein sequence ID" value="AAH10458.1"/>
    <property type="molecule type" value="mRNA"/>
</dbReference>
<dbReference type="EMBL" id="BC011240">
    <property type="protein sequence ID" value="AAH11240.1"/>
    <property type="molecule type" value="mRNA"/>
</dbReference>
<dbReference type="EMBL" id="BC093038">
    <property type="protein sequence ID" value="AAH93038.1"/>
    <property type="molecule type" value="mRNA"/>
</dbReference>
<dbReference type="CCDS" id="CCDS61384.1">
    <molecule id="Q9UN36-3"/>
</dbReference>
<dbReference type="CCDS" id="CCDS61386.1">
    <molecule id="Q9UN36-6"/>
</dbReference>
<dbReference type="CCDS" id="CCDS73613.1">
    <molecule id="Q9UN36-5"/>
</dbReference>
<dbReference type="CCDS" id="CCDS9564.1">
    <molecule id="Q9UN36-2"/>
</dbReference>
<dbReference type="CCDS" id="CCDS9565.1">
    <molecule id="Q9UN36-1"/>
</dbReference>
<dbReference type="RefSeq" id="NP_001269140.1">
    <molecule id="Q9UN36-6"/>
    <property type="nucleotide sequence ID" value="NM_001282211.2"/>
</dbReference>
<dbReference type="RefSeq" id="NP_001269141.1">
    <molecule id="Q9UN36-5"/>
    <property type="nucleotide sequence ID" value="NM_001282212.2"/>
</dbReference>
<dbReference type="RefSeq" id="NP_001269142.1">
    <molecule id="Q9UN36-2"/>
    <property type="nucleotide sequence ID" value="NM_001282213.2"/>
</dbReference>
<dbReference type="RefSeq" id="NP_001269143.1">
    <molecule id="Q9UN36-2"/>
    <property type="nucleotide sequence ID" value="NM_001282214.2"/>
</dbReference>
<dbReference type="RefSeq" id="NP_001269144.1">
    <molecule id="Q9UN36-3"/>
    <property type="nucleotide sequence ID" value="NM_001282215.2"/>
</dbReference>
<dbReference type="RefSeq" id="NP_001269145.1">
    <property type="nucleotide sequence ID" value="NM_001282216.1"/>
</dbReference>
<dbReference type="RefSeq" id="NP_001307258.1">
    <molecule id="Q9UN36-1"/>
    <property type="nucleotide sequence ID" value="NM_001320329.2"/>
</dbReference>
<dbReference type="RefSeq" id="NP_001341488.1">
    <molecule id="Q9UN36-1"/>
    <property type="nucleotide sequence ID" value="NM_001354559.2"/>
</dbReference>
<dbReference type="RefSeq" id="NP_001341490.1">
    <molecule id="Q9UN36-2"/>
    <property type="nucleotide sequence ID" value="NM_001354561.2"/>
</dbReference>
<dbReference type="RefSeq" id="NP_001341491.1">
    <molecule id="Q9UN36-1"/>
    <property type="nucleotide sequence ID" value="NM_001354562.2"/>
</dbReference>
<dbReference type="RefSeq" id="NP_001341494.1">
    <molecule id="Q9UN36-1"/>
    <property type="nucleotide sequence ID" value="NM_001354565.2"/>
</dbReference>
<dbReference type="RefSeq" id="NP_001341495.1">
    <molecule id="Q9UN36-1"/>
    <property type="nucleotide sequence ID" value="NM_001354566.1"/>
</dbReference>
<dbReference type="RefSeq" id="NP_001341496.1">
    <molecule id="Q9UN36-1"/>
    <property type="nucleotide sequence ID" value="NM_001354567.2"/>
</dbReference>
<dbReference type="RefSeq" id="NP_001341497.1">
    <molecule id="Q9UN36-2"/>
    <property type="nucleotide sequence ID" value="NM_001354568.2"/>
</dbReference>
<dbReference type="RefSeq" id="NP_001341498.1">
    <molecule id="Q9UN36-2"/>
    <property type="nucleotide sequence ID" value="NM_001354569.1"/>
</dbReference>
<dbReference type="RefSeq" id="NP_001341499.1">
    <molecule id="Q9UN36-1"/>
    <property type="nucleotide sequence ID" value="NM_001354570.2"/>
</dbReference>
<dbReference type="RefSeq" id="NP_057334.1">
    <molecule id="Q9UN36-2"/>
    <property type="nucleotide sequence ID" value="NM_016250.3"/>
</dbReference>
<dbReference type="RefSeq" id="NP_963293.1">
    <molecule id="Q9UN36-1"/>
    <property type="nucleotide sequence ID" value="NM_201535.2"/>
</dbReference>
<dbReference type="RefSeq" id="NP_963294.1">
    <molecule id="Q9UN36-2"/>
    <property type="nucleotide sequence ID" value="NM_201536.2"/>
</dbReference>
<dbReference type="RefSeq" id="NP_963831.1">
    <molecule id="Q9UN36-1"/>
    <property type="nucleotide sequence ID" value="NM_201537.2"/>
</dbReference>
<dbReference type="RefSeq" id="NP_963832.1">
    <molecule id="Q9UN36-2"/>
    <property type="nucleotide sequence ID" value="NM_201538.2"/>
</dbReference>
<dbReference type="RefSeq" id="NP_963833.1">
    <molecule id="Q9UN36-1"/>
    <property type="nucleotide sequence ID" value="NM_201539.2"/>
</dbReference>
<dbReference type="RefSeq" id="NP_963834.1">
    <molecule id="Q9UN36-1"/>
    <property type="nucleotide sequence ID" value="NM_201540.2"/>
</dbReference>
<dbReference type="RefSeq" id="NP_963835.1">
    <molecule id="Q9UN36-2"/>
    <property type="nucleotide sequence ID" value="NM_201541.2"/>
</dbReference>
<dbReference type="RefSeq" id="XP_011535298.1">
    <property type="nucleotide sequence ID" value="XM_011536996.2"/>
</dbReference>
<dbReference type="RefSeq" id="XP_011535299.1">
    <property type="nucleotide sequence ID" value="XM_011536997.1"/>
</dbReference>
<dbReference type="RefSeq" id="XP_011535300.1">
    <property type="nucleotide sequence ID" value="XM_011536998.1"/>
</dbReference>
<dbReference type="RefSeq" id="XP_011535301.1">
    <property type="nucleotide sequence ID" value="XM_011536999.1"/>
</dbReference>
<dbReference type="RefSeq" id="XP_011535303.1">
    <property type="nucleotide sequence ID" value="XM_011537001.1"/>
</dbReference>
<dbReference type="RefSeq" id="XP_011535304.1">
    <property type="nucleotide sequence ID" value="XM_011537002.1"/>
</dbReference>
<dbReference type="PDB" id="2XMQ">
    <property type="method" value="X-ray"/>
    <property type="resolution" value="2.81 A"/>
    <property type="chains" value="A/B/C=40-318"/>
</dbReference>
<dbReference type="PDB" id="2XMR">
    <property type="method" value="X-ray"/>
    <property type="resolution" value="2.00 A"/>
    <property type="chains" value="A/B/C=40-318"/>
</dbReference>
<dbReference type="PDB" id="2XMS">
    <property type="method" value="X-ray"/>
    <property type="resolution" value="2.15 A"/>
    <property type="chains" value="A=40-318"/>
</dbReference>
<dbReference type="PDBsum" id="2XMQ"/>
<dbReference type="PDBsum" id="2XMR"/>
<dbReference type="PDBsum" id="2XMS"/>
<dbReference type="SMR" id="Q9UN36"/>
<dbReference type="BioGRID" id="121520">
    <property type="interactions" value="56"/>
</dbReference>
<dbReference type="FunCoup" id="Q9UN36">
    <property type="interactions" value="1054"/>
</dbReference>
<dbReference type="IntAct" id="Q9UN36">
    <property type="interactions" value="40"/>
</dbReference>
<dbReference type="MINT" id="Q9UN36"/>
<dbReference type="STRING" id="9606.ENSP00000451712"/>
<dbReference type="ESTHER" id="human-NDRG2">
    <property type="family name" value="Ndr_family"/>
</dbReference>
<dbReference type="iPTMnet" id="Q9UN36"/>
<dbReference type="PhosphoSitePlus" id="Q9UN36"/>
<dbReference type="SwissPalm" id="Q9UN36"/>
<dbReference type="BioMuta" id="NDRG2"/>
<dbReference type="DMDM" id="20141615"/>
<dbReference type="jPOST" id="Q9UN36"/>
<dbReference type="MassIVE" id="Q9UN36"/>
<dbReference type="PaxDb" id="9606-ENSP00000451712"/>
<dbReference type="PeptideAtlas" id="Q9UN36"/>
<dbReference type="ProteomicsDB" id="3929"/>
<dbReference type="ProteomicsDB" id="85243">
    <molecule id="Q9UN36-1"/>
</dbReference>
<dbReference type="ProteomicsDB" id="85244">
    <molecule id="Q9UN36-2"/>
</dbReference>
<dbReference type="ProteomicsDB" id="85245">
    <molecule id="Q9UN36-3"/>
</dbReference>
<dbReference type="ProteomicsDB" id="85246">
    <molecule id="Q9UN36-4"/>
</dbReference>
<dbReference type="ProteomicsDB" id="85247">
    <molecule id="Q9UN36-5"/>
</dbReference>
<dbReference type="Pumba" id="Q9UN36"/>
<dbReference type="Antibodypedia" id="142">
    <property type="antibodies" value="382 antibodies from 37 providers"/>
</dbReference>
<dbReference type="DNASU" id="57447"/>
<dbReference type="Ensembl" id="ENST00000298684.9">
    <molecule id="Q9UN36-4"/>
    <property type="protein sequence ID" value="ENSP00000298684.5"/>
    <property type="gene ID" value="ENSG00000165795.25"/>
</dbReference>
<dbReference type="Ensembl" id="ENST00000298687.9">
    <molecule id="Q9UN36-1"/>
    <property type="protein sequence ID" value="ENSP00000298687.5"/>
    <property type="gene ID" value="ENSG00000165795.25"/>
</dbReference>
<dbReference type="Ensembl" id="ENST00000350792.7">
    <molecule id="Q9UN36-2"/>
    <property type="protein sequence ID" value="ENSP00000344620.3"/>
    <property type="gene ID" value="ENSG00000165795.25"/>
</dbReference>
<dbReference type="Ensembl" id="ENST00000360463.7">
    <molecule id="Q9UN36-2"/>
    <property type="protein sequence ID" value="ENSP00000353649.3"/>
    <property type="gene ID" value="ENSG00000165795.25"/>
</dbReference>
<dbReference type="Ensembl" id="ENST00000397844.6">
    <molecule id="Q9UN36-5"/>
    <property type="protein sequence ID" value="ENSP00000380943.2"/>
    <property type="gene ID" value="ENSG00000165795.25"/>
</dbReference>
<dbReference type="Ensembl" id="ENST00000397847.6">
    <molecule id="Q9UN36-3"/>
    <property type="protein sequence ID" value="ENSP00000380945.2"/>
    <property type="gene ID" value="ENSG00000165795.25"/>
</dbReference>
<dbReference type="Ensembl" id="ENST00000397851.6">
    <molecule id="Q9UN36-1"/>
    <property type="protein sequence ID" value="ENSP00000380949.2"/>
    <property type="gene ID" value="ENSG00000165795.25"/>
</dbReference>
<dbReference type="Ensembl" id="ENST00000397853.7">
    <molecule id="Q9UN36-1"/>
    <property type="protein sequence ID" value="ENSP00000380951.3"/>
    <property type="gene ID" value="ENSG00000165795.25"/>
</dbReference>
<dbReference type="Ensembl" id="ENST00000397858.5">
    <molecule id="Q9UN36-1"/>
    <property type="protein sequence ID" value="ENSP00000380956.1"/>
    <property type="gene ID" value="ENSG00000165795.25"/>
</dbReference>
<dbReference type="Ensembl" id="ENST00000403829.7">
    <molecule id="Q9UN36-6"/>
    <property type="protein sequence ID" value="ENSP00000385889.3"/>
    <property type="gene ID" value="ENSG00000165795.25"/>
</dbReference>
<dbReference type="Ensembl" id="ENST00000553503.5">
    <molecule id="Q9UN36-2"/>
    <property type="protein sequence ID" value="ENSP00000452306.1"/>
    <property type="gene ID" value="ENSG00000165795.25"/>
</dbReference>
<dbReference type="Ensembl" id="ENST00000554143.5">
    <molecule id="Q9UN36-2"/>
    <property type="protein sequence ID" value="ENSP00000452006.1"/>
    <property type="gene ID" value="ENSG00000165795.25"/>
</dbReference>
<dbReference type="Ensembl" id="ENST00000555158.5">
    <molecule id="Q9UN36-2"/>
    <property type="protein sequence ID" value="ENSP00000452038.1"/>
    <property type="gene ID" value="ENSG00000165795.25"/>
</dbReference>
<dbReference type="Ensembl" id="ENST00000556147.6">
    <molecule id="Q9UN36-1"/>
    <property type="protein sequence ID" value="ENSP00000451712.1"/>
    <property type="gene ID" value="ENSG00000165795.25"/>
</dbReference>
<dbReference type="GeneID" id="57447"/>
<dbReference type="KEGG" id="hsa:57447"/>
<dbReference type="MANE-Select" id="ENST00000556147.6">
    <property type="protein sequence ID" value="ENSP00000451712.1"/>
    <property type="RefSeq nucleotide sequence ID" value="NM_001320329.2"/>
    <property type="RefSeq protein sequence ID" value="NP_001307258.1"/>
</dbReference>
<dbReference type="UCSC" id="uc001vyu.4">
    <molecule id="Q9UN36-1"/>
    <property type="organism name" value="human"/>
</dbReference>
<dbReference type="AGR" id="HGNC:14460"/>
<dbReference type="CTD" id="57447"/>
<dbReference type="DisGeNET" id="57447"/>
<dbReference type="GeneCards" id="NDRG2"/>
<dbReference type="HGNC" id="HGNC:14460">
    <property type="gene designation" value="NDRG2"/>
</dbReference>
<dbReference type="HPA" id="ENSG00000165795">
    <property type="expression patterns" value="Tissue enhanced (brain, salivary gland, skeletal muscle)"/>
</dbReference>
<dbReference type="MIM" id="605272">
    <property type="type" value="gene"/>
</dbReference>
<dbReference type="neXtProt" id="NX_Q9UN36"/>
<dbReference type="OpenTargets" id="ENSG00000165795"/>
<dbReference type="PharmGKB" id="PA31483"/>
<dbReference type="VEuPathDB" id="HostDB:ENSG00000165795"/>
<dbReference type="eggNOG" id="KOG2931">
    <property type="taxonomic scope" value="Eukaryota"/>
</dbReference>
<dbReference type="GeneTree" id="ENSGT00950000182872"/>
<dbReference type="InParanoid" id="Q9UN36"/>
<dbReference type="OMA" id="KTCFQPL"/>
<dbReference type="OrthoDB" id="741027at2759"/>
<dbReference type="PAN-GO" id="Q9UN36">
    <property type="GO annotations" value="2 GO annotations based on evolutionary models"/>
</dbReference>
<dbReference type="PhylomeDB" id="Q9UN36"/>
<dbReference type="TreeFam" id="TF313168"/>
<dbReference type="PathwayCommons" id="Q9UN36"/>
<dbReference type="SignaLink" id="Q9UN36"/>
<dbReference type="SIGNOR" id="Q9UN36"/>
<dbReference type="BioGRID-ORCS" id="57447">
    <property type="hits" value="15 hits in 1157 CRISPR screens"/>
</dbReference>
<dbReference type="CD-CODE" id="FB4E32DD">
    <property type="entry name" value="Presynaptic clusters and postsynaptic densities"/>
</dbReference>
<dbReference type="ChiTaRS" id="NDRG2">
    <property type="organism name" value="human"/>
</dbReference>
<dbReference type="EvolutionaryTrace" id="Q9UN36"/>
<dbReference type="GeneWiki" id="NDRG2"/>
<dbReference type="GenomeRNAi" id="57447"/>
<dbReference type="Pharos" id="Q9UN36">
    <property type="development level" value="Tbio"/>
</dbReference>
<dbReference type="PRO" id="PR:Q9UN36"/>
<dbReference type="Proteomes" id="UP000005640">
    <property type="component" value="Chromosome 14"/>
</dbReference>
<dbReference type="RNAct" id="Q9UN36">
    <property type="molecule type" value="protein"/>
</dbReference>
<dbReference type="Bgee" id="ENSG00000165795">
    <property type="expression patterns" value="Expressed in right frontal lobe and 204 other cell types or tissues"/>
</dbReference>
<dbReference type="ExpressionAtlas" id="Q9UN36">
    <property type="expression patterns" value="baseline and differential"/>
</dbReference>
<dbReference type="GO" id="GO:0005737">
    <property type="term" value="C:cytoplasm"/>
    <property type="evidence" value="ECO:0000318"/>
    <property type="project" value="GO_Central"/>
</dbReference>
<dbReference type="GO" id="GO:0005829">
    <property type="term" value="C:cytosol"/>
    <property type="evidence" value="ECO:0000303"/>
    <property type="project" value="UniProtKB"/>
</dbReference>
<dbReference type="GO" id="GO:0070062">
    <property type="term" value="C:extracellular exosome"/>
    <property type="evidence" value="ECO:0007005"/>
    <property type="project" value="UniProtKB"/>
</dbReference>
<dbReference type="GO" id="GO:0005794">
    <property type="term" value="C:Golgi apparatus"/>
    <property type="evidence" value="ECO:0000314"/>
    <property type="project" value="LIFEdb"/>
</dbReference>
<dbReference type="GO" id="GO:0030426">
    <property type="term" value="C:growth cone"/>
    <property type="evidence" value="ECO:0007669"/>
    <property type="project" value="UniProtKB-SubCell"/>
</dbReference>
<dbReference type="GO" id="GO:0005634">
    <property type="term" value="C:nucleus"/>
    <property type="evidence" value="ECO:0007669"/>
    <property type="project" value="Ensembl"/>
</dbReference>
<dbReference type="GO" id="GO:0048471">
    <property type="term" value="C:perinuclear region of cytoplasm"/>
    <property type="evidence" value="ECO:0007669"/>
    <property type="project" value="UniProtKB-SubCell"/>
</dbReference>
<dbReference type="GO" id="GO:0030154">
    <property type="term" value="P:cell differentiation"/>
    <property type="evidence" value="ECO:0007669"/>
    <property type="project" value="UniProtKB-KW"/>
</dbReference>
<dbReference type="GO" id="GO:0001818">
    <property type="term" value="P:negative regulation of cytokine production"/>
    <property type="evidence" value="ECO:0007669"/>
    <property type="project" value="Ensembl"/>
</dbReference>
<dbReference type="GO" id="GO:0070373">
    <property type="term" value="P:negative regulation of ERK1 and ERK2 cascade"/>
    <property type="evidence" value="ECO:0007669"/>
    <property type="project" value="Ensembl"/>
</dbReference>
<dbReference type="GO" id="GO:1904706">
    <property type="term" value="P:negative regulation of vascular associated smooth muscle cell proliferation"/>
    <property type="evidence" value="ECO:0007669"/>
    <property type="project" value="Ensembl"/>
</dbReference>
<dbReference type="GO" id="GO:0090361">
    <property type="term" value="P:regulation of platelet-derived growth factor production"/>
    <property type="evidence" value="ECO:0007669"/>
    <property type="project" value="Ensembl"/>
</dbReference>
<dbReference type="GO" id="GO:0010574">
    <property type="term" value="P:regulation of vascular endothelial growth factor production"/>
    <property type="evidence" value="ECO:0007669"/>
    <property type="project" value="Ensembl"/>
</dbReference>
<dbReference type="GO" id="GO:0007165">
    <property type="term" value="P:signal transduction"/>
    <property type="evidence" value="ECO:0000318"/>
    <property type="project" value="GO_Central"/>
</dbReference>
<dbReference type="GO" id="GO:0021762">
    <property type="term" value="P:substantia nigra development"/>
    <property type="evidence" value="ECO:0007007"/>
    <property type="project" value="UniProtKB"/>
</dbReference>
<dbReference type="GO" id="GO:1990874">
    <property type="term" value="P:vascular associated smooth muscle cell proliferation"/>
    <property type="evidence" value="ECO:0007669"/>
    <property type="project" value="Ensembl"/>
</dbReference>
<dbReference type="GO" id="GO:0016055">
    <property type="term" value="P:Wnt signaling pathway"/>
    <property type="evidence" value="ECO:0007669"/>
    <property type="project" value="UniProtKB-KW"/>
</dbReference>
<dbReference type="FunFam" id="3.40.50.1820:FF:000034">
    <property type="entry name" value="NDRG2 isoform 1"/>
    <property type="match status" value="1"/>
</dbReference>
<dbReference type="Gene3D" id="3.40.50.1820">
    <property type="entry name" value="alpha/beta hydrolase"/>
    <property type="match status" value="1"/>
</dbReference>
<dbReference type="InterPro" id="IPR029058">
    <property type="entry name" value="AB_hydrolase_fold"/>
</dbReference>
<dbReference type="InterPro" id="IPR004142">
    <property type="entry name" value="NDRG"/>
</dbReference>
<dbReference type="PANTHER" id="PTHR11034">
    <property type="entry name" value="N-MYC DOWNSTREAM REGULATED"/>
    <property type="match status" value="1"/>
</dbReference>
<dbReference type="Pfam" id="PF03096">
    <property type="entry name" value="Ndr"/>
    <property type="match status" value="1"/>
</dbReference>
<dbReference type="SUPFAM" id="SSF53474">
    <property type="entry name" value="alpha/beta-Hydrolases"/>
    <property type="match status" value="1"/>
</dbReference>
<proteinExistence type="evidence at protein level"/>
<accession>Q9UN36</accession>
<accession>B3KUE3</accession>
<accession>B4DE86</accession>
<accession>B7WP11</accession>
<accession>B7WPD5</accession>
<accession>D3DS07</accession>
<accession>D3DS10</accession>
<accession>Q567T1</accession>
<accession>Q68DW2</accession>
<accession>Q86U08</accession>
<accession>Q86U46</accession>
<accession>Q96FD3</accession>
<accession>Q96FT0</accession>
<accession>Q96JU0</accession>
<accession>Q96PN0</accession>
<accession>Q9BQH5</accession>
<accession>Q9ULH2</accession>
<reference key="1">
    <citation type="journal article" date="2001" name="Genomics">
        <title>Characterization of the human NDRG gene family: a newly identified member, NDRG4, is specifically expressed in brain and heart.</title>
        <authorList>
            <person name="Zhou R.-H."/>
            <person name="Kokame K."/>
            <person name="Tsukamoto Y."/>
            <person name="Yutani C."/>
            <person name="Kato H."/>
            <person name="Miyata T."/>
        </authorList>
    </citation>
    <scope>NUCLEOTIDE SEQUENCE [MRNA] (ISOFORM 1)</scope>
    <scope>TISSUE SPECIFICITY</scope>
    <scope>SUBCELLULAR LOCATION</scope>
</reference>
<reference key="2">
    <citation type="journal article" date="2002" name="Mol. Cell. Biochem.">
        <title>Characterization and expression of three novel differentiation-related genes belong to the human NDRG gene family.</title>
        <authorList>
            <person name="Qu X."/>
            <person name="Zhai Y."/>
            <person name="Wei H."/>
            <person name="Zhang C."/>
            <person name="Xing G."/>
            <person name="Yu Y."/>
            <person name="He F."/>
        </authorList>
    </citation>
    <scope>NUCLEOTIDE SEQUENCE [MRNA] (ISOFORM 1)</scope>
    <scope>TISSUE SPECIFICITY</scope>
</reference>
<reference key="3">
    <citation type="journal article" date="2003" name="Int. J. Cancer">
        <title>N-Myc downstream-regulated gene 2 (NDRG2) inhibits glioblastoma cell proliferation.</title>
        <authorList>
            <person name="Deng Y."/>
            <person name="Yao L."/>
            <person name="Chau L."/>
            <person name="Ng S.S.-M."/>
            <person name="Peng Y."/>
            <person name="Liu X."/>
            <person name="Au W.-S."/>
            <person name="Wang J."/>
            <person name="Li F."/>
            <person name="Ji S."/>
            <person name="Han H."/>
            <person name="Nie X."/>
            <person name="Li Q."/>
            <person name="Kung H.-F."/>
            <person name="Leung S.-Y."/>
            <person name="Lin M.C.-M."/>
        </authorList>
    </citation>
    <scope>NUCLEOTIDE SEQUENCE [GENOMIC DNA / MRNA] (ISOFORM 2)</scope>
    <scope>TISSUE SPECIFICITY</scope>
    <scope>FUNCTION</scope>
    <source>
        <tissue>Brain</tissue>
    </source>
</reference>
<reference key="4">
    <citation type="journal article" date="1999" name="DNA Res.">
        <title>Prediction of the coding sequences of unidentified human genes. XV. The complete sequences of 100 new cDNA clones from brain which code for large proteins in vitro.</title>
        <authorList>
            <person name="Nagase T."/>
            <person name="Ishikawa K."/>
            <person name="Kikuno R."/>
            <person name="Hirosawa M."/>
            <person name="Nomura N."/>
            <person name="Ohara O."/>
        </authorList>
    </citation>
    <scope>NUCLEOTIDE SEQUENCE [LARGE SCALE MRNA] (ISOFORM 2)</scope>
    <source>
        <tissue>Brain</tissue>
    </source>
</reference>
<reference key="5">
    <citation type="journal article" date="2001" name="Genome Res.">
        <title>Towards a catalog of human genes and proteins: sequencing and analysis of 500 novel complete protein coding human cDNAs.</title>
        <authorList>
            <person name="Wiemann S."/>
            <person name="Weil B."/>
            <person name="Wellenreuther R."/>
            <person name="Gassenhuber J."/>
            <person name="Glassl S."/>
            <person name="Ansorge W."/>
            <person name="Boecher M."/>
            <person name="Bloecker H."/>
            <person name="Bauersachs S."/>
            <person name="Blum H."/>
            <person name="Lauber J."/>
            <person name="Duesterhoeft A."/>
            <person name="Beyer A."/>
            <person name="Koehrer K."/>
            <person name="Strack N."/>
            <person name="Mewes H.-W."/>
            <person name="Ottenwaelder B."/>
            <person name="Obermaier B."/>
            <person name="Tampe J."/>
            <person name="Heubner D."/>
            <person name="Wambutt R."/>
            <person name="Korn B."/>
            <person name="Klein M."/>
            <person name="Poustka A."/>
        </authorList>
    </citation>
    <scope>NUCLEOTIDE SEQUENCE [LARGE SCALE MRNA] (ISOFORM 1)</scope>
    <source>
        <tissue>Amygdala</tissue>
    </source>
</reference>
<reference key="6">
    <citation type="submission" date="2003-02" db="EMBL/GenBank/DDBJ databases">
        <title>Full-length cDNA libraries and normalization.</title>
        <authorList>
            <person name="Li W.B."/>
            <person name="Gruber C."/>
            <person name="Jessee J."/>
            <person name="Polayes D."/>
        </authorList>
    </citation>
    <scope>NUCLEOTIDE SEQUENCE [LARGE SCALE MRNA] (ISOFORMS 4 AND 5)</scope>
    <source>
        <tissue>Neuroblastoma</tissue>
    </source>
</reference>
<reference key="7">
    <citation type="journal article" date="2004" name="Nat. Genet.">
        <title>Complete sequencing and characterization of 21,243 full-length human cDNAs.</title>
        <authorList>
            <person name="Ota T."/>
            <person name="Suzuki Y."/>
            <person name="Nishikawa T."/>
            <person name="Otsuki T."/>
            <person name="Sugiyama T."/>
            <person name="Irie R."/>
            <person name="Wakamatsu A."/>
            <person name="Hayashi K."/>
            <person name="Sato H."/>
            <person name="Nagai K."/>
            <person name="Kimura K."/>
            <person name="Makita H."/>
            <person name="Sekine M."/>
            <person name="Obayashi M."/>
            <person name="Nishi T."/>
            <person name="Shibahara T."/>
            <person name="Tanaka T."/>
            <person name="Ishii S."/>
            <person name="Yamamoto J."/>
            <person name="Saito K."/>
            <person name="Kawai Y."/>
            <person name="Isono Y."/>
            <person name="Nakamura Y."/>
            <person name="Nagahari K."/>
            <person name="Murakami K."/>
            <person name="Yasuda T."/>
            <person name="Iwayanagi T."/>
            <person name="Wagatsuma M."/>
            <person name="Shiratori A."/>
            <person name="Sudo H."/>
            <person name="Hosoiri T."/>
            <person name="Kaku Y."/>
            <person name="Kodaira H."/>
            <person name="Kondo H."/>
            <person name="Sugawara M."/>
            <person name="Takahashi M."/>
            <person name="Kanda K."/>
            <person name="Yokoi T."/>
            <person name="Furuya T."/>
            <person name="Kikkawa E."/>
            <person name="Omura Y."/>
            <person name="Abe K."/>
            <person name="Kamihara K."/>
            <person name="Katsuta N."/>
            <person name="Sato K."/>
            <person name="Tanikawa M."/>
            <person name="Yamazaki M."/>
            <person name="Ninomiya K."/>
            <person name="Ishibashi T."/>
            <person name="Yamashita H."/>
            <person name="Murakawa K."/>
            <person name="Fujimori K."/>
            <person name="Tanai H."/>
            <person name="Kimata M."/>
            <person name="Watanabe M."/>
            <person name="Hiraoka S."/>
            <person name="Chiba Y."/>
            <person name="Ishida S."/>
            <person name="Ono Y."/>
            <person name="Takiguchi S."/>
            <person name="Watanabe S."/>
            <person name="Yosida M."/>
            <person name="Hotuta T."/>
            <person name="Kusano J."/>
            <person name="Kanehori K."/>
            <person name="Takahashi-Fujii A."/>
            <person name="Hara H."/>
            <person name="Tanase T.-O."/>
            <person name="Nomura Y."/>
            <person name="Togiya S."/>
            <person name="Komai F."/>
            <person name="Hara R."/>
            <person name="Takeuchi K."/>
            <person name="Arita M."/>
            <person name="Imose N."/>
            <person name="Musashino K."/>
            <person name="Yuuki H."/>
            <person name="Oshima A."/>
            <person name="Sasaki N."/>
            <person name="Aotsuka S."/>
            <person name="Yoshikawa Y."/>
            <person name="Matsunawa H."/>
            <person name="Ichihara T."/>
            <person name="Shiohata N."/>
            <person name="Sano S."/>
            <person name="Moriya S."/>
            <person name="Momiyama H."/>
            <person name="Satoh N."/>
            <person name="Takami S."/>
            <person name="Terashima Y."/>
            <person name="Suzuki O."/>
            <person name="Nakagawa S."/>
            <person name="Senoh A."/>
            <person name="Mizoguchi H."/>
            <person name="Goto Y."/>
            <person name="Shimizu F."/>
            <person name="Wakebe H."/>
            <person name="Hishigaki H."/>
            <person name="Watanabe T."/>
            <person name="Sugiyama A."/>
            <person name="Takemoto M."/>
            <person name="Kawakami B."/>
            <person name="Yamazaki M."/>
            <person name="Watanabe K."/>
            <person name="Kumagai A."/>
            <person name="Itakura S."/>
            <person name="Fukuzumi Y."/>
            <person name="Fujimori Y."/>
            <person name="Komiyama M."/>
            <person name="Tashiro H."/>
            <person name="Tanigami A."/>
            <person name="Fujiwara T."/>
            <person name="Ono T."/>
            <person name="Yamada K."/>
            <person name="Fujii Y."/>
            <person name="Ozaki K."/>
            <person name="Hirao M."/>
            <person name="Ohmori Y."/>
            <person name="Kawabata A."/>
            <person name="Hikiji T."/>
            <person name="Kobatake N."/>
            <person name="Inagaki H."/>
            <person name="Ikema Y."/>
            <person name="Okamoto S."/>
            <person name="Okitani R."/>
            <person name="Kawakami T."/>
            <person name="Noguchi S."/>
            <person name="Itoh T."/>
            <person name="Shigeta K."/>
            <person name="Senba T."/>
            <person name="Matsumura K."/>
            <person name="Nakajima Y."/>
            <person name="Mizuno T."/>
            <person name="Morinaga M."/>
            <person name="Sasaki M."/>
            <person name="Togashi T."/>
            <person name="Oyama M."/>
            <person name="Hata H."/>
            <person name="Watanabe M."/>
            <person name="Komatsu T."/>
            <person name="Mizushima-Sugano J."/>
            <person name="Satoh T."/>
            <person name="Shirai Y."/>
            <person name="Takahashi Y."/>
            <person name="Nakagawa K."/>
            <person name="Okumura K."/>
            <person name="Nagase T."/>
            <person name="Nomura N."/>
            <person name="Kikuchi H."/>
            <person name="Masuho Y."/>
            <person name="Yamashita R."/>
            <person name="Nakai K."/>
            <person name="Yada T."/>
            <person name="Nakamura Y."/>
            <person name="Ohara O."/>
            <person name="Isogai T."/>
            <person name="Sugano S."/>
        </authorList>
    </citation>
    <scope>NUCLEOTIDE SEQUENCE [LARGE SCALE MRNA] (ISOFORMS 1 AND 6)</scope>
    <source>
        <tissue>Cerebellum</tissue>
        <tissue>Small intestine</tissue>
    </source>
</reference>
<reference key="8">
    <citation type="journal article" date="2007" name="BMC Genomics">
        <title>The full-ORF clone resource of the German cDNA consortium.</title>
        <authorList>
            <person name="Bechtel S."/>
            <person name="Rosenfelder H."/>
            <person name="Duda A."/>
            <person name="Schmidt C.P."/>
            <person name="Ernst U."/>
            <person name="Wellenreuther R."/>
            <person name="Mehrle A."/>
            <person name="Schuster C."/>
            <person name="Bahr A."/>
            <person name="Bloecker H."/>
            <person name="Heubner D."/>
            <person name="Hoerlein A."/>
            <person name="Michel G."/>
            <person name="Wedler H."/>
            <person name="Koehrer K."/>
            <person name="Ottenwaelder B."/>
            <person name="Poustka A."/>
            <person name="Wiemann S."/>
            <person name="Schupp I."/>
        </authorList>
    </citation>
    <scope>NUCLEOTIDE SEQUENCE [LARGE SCALE MRNA] (ISOFORM 2)</scope>
    <source>
        <tissue>Hippocampus</tissue>
    </source>
</reference>
<reference key="9">
    <citation type="journal article" date="2003" name="Nature">
        <title>The DNA sequence and analysis of human chromosome 14.</title>
        <authorList>
            <person name="Heilig R."/>
            <person name="Eckenberg R."/>
            <person name="Petit J.-L."/>
            <person name="Fonknechten N."/>
            <person name="Da Silva C."/>
            <person name="Cattolico L."/>
            <person name="Levy M."/>
            <person name="Barbe V."/>
            <person name="De Berardinis V."/>
            <person name="Ureta-Vidal A."/>
            <person name="Pelletier E."/>
            <person name="Vico V."/>
            <person name="Anthouard V."/>
            <person name="Rowen L."/>
            <person name="Madan A."/>
            <person name="Qin S."/>
            <person name="Sun H."/>
            <person name="Du H."/>
            <person name="Pepin K."/>
            <person name="Artiguenave F."/>
            <person name="Robert C."/>
            <person name="Cruaud C."/>
            <person name="Bruels T."/>
            <person name="Jaillon O."/>
            <person name="Friedlander L."/>
            <person name="Samson G."/>
            <person name="Brottier P."/>
            <person name="Cure S."/>
            <person name="Segurens B."/>
            <person name="Aniere F."/>
            <person name="Samain S."/>
            <person name="Crespeau H."/>
            <person name="Abbasi N."/>
            <person name="Aiach N."/>
            <person name="Boscus D."/>
            <person name="Dickhoff R."/>
            <person name="Dors M."/>
            <person name="Dubois I."/>
            <person name="Friedman C."/>
            <person name="Gouyvenoux M."/>
            <person name="James R."/>
            <person name="Madan A."/>
            <person name="Mairey-Estrada B."/>
            <person name="Mangenot S."/>
            <person name="Martins N."/>
            <person name="Menard M."/>
            <person name="Oztas S."/>
            <person name="Ratcliffe A."/>
            <person name="Shaffer T."/>
            <person name="Trask B."/>
            <person name="Vacherie B."/>
            <person name="Bellemere C."/>
            <person name="Belser C."/>
            <person name="Besnard-Gonnet M."/>
            <person name="Bartol-Mavel D."/>
            <person name="Boutard M."/>
            <person name="Briez-Silla S."/>
            <person name="Combette S."/>
            <person name="Dufosse-Laurent V."/>
            <person name="Ferron C."/>
            <person name="Lechaplais C."/>
            <person name="Louesse C."/>
            <person name="Muselet D."/>
            <person name="Magdelenat G."/>
            <person name="Pateau E."/>
            <person name="Petit E."/>
            <person name="Sirvain-Trukniewicz P."/>
            <person name="Trybou A."/>
            <person name="Vega-Czarny N."/>
            <person name="Bataille E."/>
            <person name="Bluet E."/>
            <person name="Bordelais I."/>
            <person name="Dubois M."/>
            <person name="Dumont C."/>
            <person name="Guerin T."/>
            <person name="Haffray S."/>
            <person name="Hammadi R."/>
            <person name="Muanga J."/>
            <person name="Pellouin V."/>
            <person name="Robert D."/>
            <person name="Wunderle E."/>
            <person name="Gauguet G."/>
            <person name="Roy A."/>
            <person name="Sainte-Marthe L."/>
            <person name="Verdier J."/>
            <person name="Verdier-Discala C."/>
            <person name="Hillier L.W."/>
            <person name="Fulton L."/>
            <person name="McPherson J."/>
            <person name="Matsuda F."/>
            <person name="Wilson R."/>
            <person name="Scarpelli C."/>
            <person name="Gyapay G."/>
            <person name="Wincker P."/>
            <person name="Saurin W."/>
            <person name="Quetier F."/>
            <person name="Waterston R."/>
            <person name="Hood L."/>
            <person name="Weissenbach J."/>
        </authorList>
    </citation>
    <scope>NUCLEOTIDE SEQUENCE [LARGE SCALE GENOMIC DNA]</scope>
</reference>
<reference key="10">
    <citation type="submission" date="2005-09" db="EMBL/GenBank/DDBJ databases">
        <authorList>
            <person name="Mural R.J."/>
            <person name="Istrail S."/>
            <person name="Sutton G.G."/>
            <person name="Florea L."/>
            <person name="Halpern A.L."/>
            <person name="Mobarry C.M."/>
            <person name="Lippert R."/>
            <person name="Walenz B."/>
            <person name="Shatkay H."/>
            <person name="Dew I."/>
            <person name="Miller J.R."/>
            <person name="Flanigan M.J."/>
            <person name="Edwards N.J."/>
            <person name="Bolanos R."/>
            <person name="Fasulo D."/>
            <person name="Halldorsson B.V."/>
            <person name="Hannenhalli S."/>
            <person name="Turner R."/>
            <person name="Yooseph S."/>
            <person name="Lu F."/>
            <person name="Nusskern D.R."/>
            <person name="Shue B.C."/>
            <person name="Zheng X.H."/>
            <person name="Zhong F."/>
            <person name="Delcher A.L."/>
            <person name="Huson D.H."/>
            <person name="Kravitz S.A."/>
            <person name="Mouchard L."/>
            <person name="Reinert K."/>
            <person name="Remington K.A."/>
            <person name="Clark A.G."/>
            <person name="Waterman M.S."/>
            <person name="Eichler E.E."/>
            <person name="Adams M.D."/>
            <person name="Hunkapiller M.W."/>
            <person name="Myers E.W."/>
            <person name="Venter J.C."/>
        </authorList>
    </citation>
    <scope>NUCLEOTIDE SEQUENCE [LARGE SCALE GENOMIC DNA]</scope>
</reference>
<reference key="11">
    <citation type="journal article" date="2004" name="Genome Res.">
        <title>The status, quality, and expansion of the NIH full-length cDNA project: the Mammalian Gene Collection (MGC).</title>
        <authorList>
            <consortium name="The MGC Project Team"/>
        </authorList>
    </citation>
    <scope>NUCLEOTIDE SEQUENCE [LARGE SCALE MRNA] (ISOFORMS 2 AND 3)</scope>
    <scope>VARIANT VAL-48</scope>
    <source>
        <tissue>Brain</tissue>
    </source>
</reference>
<reference key="12">
    <citation type="journal article" date="2003" name="FEBS Lett.">
        <title>Expression and regulation of NDRG2 (N-myc downstream regulated gene 2) during the differentiation of dendritic cells.</title>
        <authorList>
            <person name="Choi S.-C."/>
            <person name="Kim K.D."/>
            <person name="Kim J.-T."/>
            <person name="Kim J.-W."/>
            <person name="Yoon D.-Y."/>
            <person name="Choe Y.-K."/>
            <person name="Chang Y.-S."/>
            <person name="Paik S.-G."/>
            <person name="Lim J.-S."/>
        </authorList>
    </citation>
    <scope>TISSUE SPECIFICITY</scope>
    <scope>DEVELOPMENTAL STAGE</scope>
</reference>
<reference key="13">
    <citation type="journal article" date="2004" name="Neurobiol. Dis.">
        <title>NDRG2: a novel Alzheimer's disease associated protein.</title>
        <authorList>
            <person name="Mitchelmore C."/>
            <person name="Buechmann-Moller S."/>
            <person name="Rask L."/>
            <person name="West M.J."/>
            <person name="Troncoso J.C."/>
            <person name="Jensen N.A."/>
        </authorList>
    </citation>
    <scope>TISSUE SPECIFICITY</scope>
    <scope>DEVELOPMENTAL STAGE</scope>
    <scope>SUBCELLULAR LOCATION</scope>
</reference>
<reference key="14">
    <citation type="journal article" date="2004" name="World J. Gastroenterol.">
        <title>NDRG2 expression and mutation in human liver and pancreatic cancers.</title>
        <authorList>
            <person name="Hu X.-L."/>
            <person name="Liu X.-P."/>
            <person name="Lin S.-X."/>
            <person name="Deng Y.-C."/>
            <person name="Liu N."/>
            <person name="Li X."/>
            <person name="Yao L.-B."/>
        </authorList>
    </citation>
    <scope>TISSUE SPECIFICITY</scope>
</reference>
<reference key="15">
    <citation type="journal article" date="2005" name="Cancer Res.">
        <title>Integrative genomic analysis identifies NDRG2 as a candidate tumor suppressor gene frequently inactivated in clinically aggressive meningioma.</title>
        <authorList>
            <person name="Lusis E.A."/>
            <person name="Watson M.A."/>
            <person name="Chicoine M.R."/>
            <person name="Lyman M."/>
            <person name="Roerig P."/>
            <person name="Reifenberger G."/>
            <person name="Gutmann D.H."/>
            <person name="Perry A."/>
        </authorList>
    </citation>
    <scope>TISSUE SPECIFICITY</scope>
    <scope>FUNCTION</scope>
</reference>
<reference key="16">
    <citation type="journal article" date="2008" name="Proc. Natl. Acad. Sci. U.S.A.">
        <title>A quantitative atlas of mitotic phosphorylation.</title>
        <authorList>
            <person name="Dephoure N."/>
            <person name="Zhou C."/>
            <person name="Villen J."/>
            <person name="Beausoleil S.A."/>
            <person name="Bakalarski C.E."/>
            <person name="Elledge S.J."/>
            <person name="Gygi S.P."/>
        </authorList>
    </citation>
    <scope>PHOSPHORYLATION [LARGE SCALE ANALYSIS] AT SER-338</scope>
    <scope>IDENTIFICATION BY MASS SPECTROMETRY [LARGE SCALE ANALYSIS]</scope>
    <source>
        <tissue>Cervix carcinoma</tissue>
    </source>
</reference>
<reference key="17">
    <citation type="journal article" date="2009" name="Anal. Chem.">
        <title>Lys-N and trypsin cover complementary parts of the phosphoproteome in a refined SCX-based approach.</title>
        <authorList>
            <person name="Gauci S."/>
            <person name="Helbig A.O."/>
            <person name="Slijper M."/>
            <person name="Krijgsveld J."/>
            <person name="Heck A.J."/>
            <person name="Mohammed S."/>
        </authorList>
    </citation>
    <scope>ACETYLATION [LARGE SCALE ANALYSIS] AT ALA-2</scope>
    <scope>CLEAVAGE OF INITIATOR METHIONINE [LARGE SCALE ANALYSIS]</scope>
    <scope>IDENTIFICATION BY MASS SPECTROMETRY [LARGE SCALE ANALYSIS]</scope>
</reference>
<reference key="18">
    <citation type="journal article" date="2009" name="Sci. Signal.">
        <title>Quantitative phosphoproteomic analysis of T cell receptor signaling reveals system-wide modulation of protein-protein interactions.</title>
        <authorList>
            <person name="Mayya V."/>
            <person name="Lundgren D.H."/>
            <person name="Hwang S.-I."/>
            <person name="Rezaul K."/>
            <person name="Wu L."/>
            <person name="Eng J.K."/>
            <person name="Rodionov V."/>
            <person name="Han D.K."/>
        </authorList>
    </citation>
    <scope>PHOSPHORYLATION [LARGE SCALE ANALYSIS] AT SER-328; SER-332; SER-338 AND THR-348</scope>
    <scope>IDENTIFICATION BY MASS SPECTROMETRY [LARGE SCALE ANALYSIS]</scope>
    <source>
        <tissue>Leukemic T-cell</tissue>
    </source>
</reference>
<reference key="19">
    <citation type="journal article" date="2011" name="BMC Syst. Biol.">
        <title>Initial characterization of the human central proteome.</title>
        <authorList>
            <person name="Burkard T.R."/>
            <person name="Planyavsky M."/>
            <person name="Kaupe I."/>
            <person name="Breitwieser F.P."/>
            <person name="Buerckstuemmer T."/>
            <person name="Bennett K.L."/>
            <person name="Superti-Furga G."/>
            <person name="Colinge J."/>
        </authorList>
    </citation>
    <scope>IDENTIFICATION BY MASS SPECTROMETRY [LARGE SCALE ANALYSIS]</scope>
</reference>
<reference key="20">
    <citation type="journal article" date="2012" name="Mol. Cell. Proteomics">
        <title>Comparative large-scale characterisation of plant vs. mammal proteins reveals similar and idiosyncratic N-alpha acetylation features.</title>
        <authorList>
            <person name="Bienvenut W.V."/>
            <person name="Sumpton D."/>
            <person name="Martinez A."/>
            <person name="Lilla S."/>
            <person name="Espagne C."/>
            <person name="Meinnel T."/>
            <person name="Giglione C."/>
        </authorList>
    </citation>
    <scope>ACETYLATION [LARGE SCALE ANALYSIS] AT ALA-2</scope>
    <scope>CLEAVAGE OF INITIATOR METHIONINE [LARGE SCALE ANALYSIS]</scope>
    <scope>IDENTIFICATION BY MASS SPECTROMETRY [LARGE SCALE ANALYSIS]</scope>
</reference>
<reference key="21">
    <citation type="journal article" date="2013" name="J. Proteome Res.">
        <title>Toward a comprehensive characterization of a human cancer cell phosphoproteome.</title>
        <authorList>
            <person name="Zhou H."/>
            <person name="Di Palma S."/>
            <person name="Preisinger C."/>
            <person name="Peng M."/>
            <person name="Polat A.N."/>
            <person name="Heck A.J."/>
            <person name="Mohammed S."/>
        </authorList>
    </citation>
    <scope>PHOSPHORYLATION [LARGE SCALE ANALYSIS] AT THR-330; SER-332 AND SER-338</scope>
    <scope>IDENTIFICATION BY MASS SPECTROMETRY [LARGE SCALE ANALYSIS]</scope>
    <source>
        <tissue>Cervix carcinoma</tissue>
        <tissue>Erythroleukemia</tissue>
    </source>
</reference>
<reference key="22">
    <citation type="journal article" date="2014" name="J. Proteomics">
        <title>An enzyme assisted RP-RPLC approach for in-depth analysis of human liver phosphoproteome.</title>
        <authorList>
            <person name="Bian Y."/>
            <person name="Song C."/>
            <person name="Cheng K."/>
            <person name="Dong M."/>
            <person name="Wang F."/>
            <person name="Huang J."/>
            <person name="Sun D."/>
            <person name="Wang L."/>
            <person name="Ye M."/>
            <person name="Zou H."/>
        </authorList>
    </citation>
    <scope>PHOSPHORYLATION [LARGE SCALE ANALYSIS] AT THR-20; SER-326; SER-328; THR-330; SER-332; THR-334; SER-338 AND SER-344</scope>
    <scope>IDENTIFICATION BY MASS SPECTROMETRY [LARGE SCALE ANALYSIS]</scope>
    <source>
        <tissue>Liver</tissue>
    </source>
</reference>
<reference key="23">
    <citation type="journal article" date="2011" name="J. Biol. Chem.">
        <title>Crystal structure of the human N-Myc downstream-regulated gene 2 protein provides insight into its role as a tumor suppressor.</title>
        <authorList>
            <person name="Hwang J."/>
            <person name="Kim Y."/>
            <person name="Kang H.B."/>
            <person name="Jaroszewski L."/>
            <person name="Deacon A.M."/>
            <person name="Lee H."/>
            <person name="Choi W.C."/>
            <person name="Kim K.J."/>
            <person name="Kim C.H."/>
            <person name="Kang B.S."/>
            <person name="Lee J.O."/>
            <person name="Oh T.K."/>
            <person name="Kim J.W."/>
            <person name="Wilson I.A."/>
            <person name="Kim M.H."/>
        </authorList>
    </citation>
    <scope>X-RAY CRYSTALLOGRAPHY (2.0 ANGSTROMS) OF 40-318</scope>
    <scope>FUNCTION</scope>
    <scope>INTERACTION WITH CTNNB1</scope>
    <scope>MUTAGENESIS OF LEU-186</scope>
    <scope>ABSENCE OF HYDROLASE ACTIVITY</scope>
</reference>
<organism>
    <name type="scientific">Homo sapiens</name>
    <name type="common">Human</name>
    <dbReference type="NCBI Taxonomy" id="9606"/>
    <lineage>
        <taxon>Eukaryota</taxon>
        <taxon>Metazoa</taxon>
        <taxon>Chordata</taxon>
        <taxon>Craniata</taxon>
        <taxon>Vertebrata</taxon>
        <taxon>Euteleostomi</taxon>
        <taxon>Mammalia</taxon>
        <taxon>Eutheria</taxon>
        <taxon>Euarchontoglires</taxon>
        <taxon>Primates</taxon>
        <taxon>Haplorrhini</taxon>
        <taxon>Catarrhini</taxon>
        <taxon>Hominidae</taxon>
        <taxon>Homo</taxon>
    </lineage>
</organism>